<dbReference type="EC" id="5.2.1.8" evidence="1"/>
<dbReference type="EMBL" id="CP000774">
    <property type="protein sequence ID" value="ABS64840.1"/>
    <property type="status" value="ALT_INIT"/>
    <property type="molecule type" value="Genomic_DNA"/>
</dbReference>
<dbReference type="SMR" id="A7HY57"/>
<dbReference type="STRING" id="402881.Plav_3235"/>
<dbReference type="KEGG" id="pla:Plav_3235"/>
<dbReference type="eggNOG" id="COG0544">
    <property type="taxonomic scope" value="Bacteria"/>
</dbReference>
<dbReference type="HOGENOM" id="CLU_033058_2_2_5"/>
<dbReference type="OrthoDB" id="9767721at2"/>
<dbReference type="Proteomes" id="UP000006377">
    <property type="component" value="Chromosome"/>
</dbReference>
<dbReference type="GO" id="GO:0005737">
    <property type="term" value="C:cytoplasm"/>
    <property type="evidence" value="ECO:0007669"/>
    <property type="project" value="UniProtKB-SubCell"/>
</dbReference>
<dbReference type="GO" id="GO:0003755">
    <property type="term" value="F:peptidyl-prolyl cis-trans isomerase activity"/>
    <property type="evidence" value="ECO:0007669"/>
    <property type="project" value="UniProtKB-UniRule"/>
</dbReference>
<dbReference type="GO" id="GO:0044183">
    <property type="term" value="F:protein folding chaperone"/>
    <property type="evidence" value="ECO:0007669"/>
    <property type="project" value="TreeGrafter"/>
</dbReference>
<dbReference type="GO" id="GO:0043022">
    <property type="term" value="F:ribosome binding"/>
    <property type="evidence" value="ECO:0007669"/>
    <property type="project" value="TreeGrafter"/>
</dbReference>
<dbReference type="GO" id="GO:0051083">
    <property type="term" value="P:'de novo' cotranslational protein folding"/>
    <property type="evidence" value="ECO:0007669"/>
    <property type="project" value="TreeGrafter"/>
</dbReference>
<dbReference type="GO" id="GO:0051301">
    <property type="term" value="P:cell division"/>
    <property type="evidence" value="ECO:0007669"/>
    <property type="project" value="UniProtKB-KW"/>
</dbReference>
<dbReference type="GO" id="GO:0061077">
    <property type="term" value="P:chaperone-mediated protein folding"/>
    <property type="evidence" value="ECO:0007669"/>
    <property type="project" value="TreeGrafter"/>
</dbReference>
<dbReference type="GO" id="GO:0015031">
    <property type="term" value="P:protein transport"/>
    <property type="evidence" value="ECO:0007669"/>
    <property type="project" value="UniProtKB-UniRule"/>
</dbReference>
<dbReference type="GO" id="GO:0043335">
    <property type="term" value="P:protein unfolding"/>
    <property type="evidence" value="ECO:0007669"/>
    <property type="project" value="TreeGrafter"/>
</dbReference>
<dbReference type="FunFam" id="3.10.50.40:FF:000001">
    <property type="entry name" value="Trigger factor"/>
    <property type="match status" value="1"/>
</dbReference>
<dbReference type="Gene3D" id="3.10.50.40">
    <property type="match status" value="1"/>
</dbReference>
<dbReference type="Gene3D" id="3.30.70.1050">
    <property type="entry name" value="Trigger factor ribosome-binding domain"/>
    <property type="match status" value="1"/>
</dbReference>
<dbReference type="Gene3D" id="1.10.3120.10">
    <property type="entry name" value="Trigger factor, C-terminal domain"/>
    <property type="match status" value="1"/>
</dbReference>
<dbReference type="HAMAP" id="MF_00303">
    <property type="entry name" value="Trigger_factor_Tig"/>
    <property type="match status" value="1"/>
</dbReference>
<dbReference type="InterPro" id="IPR046357">
    <property type="entry name" value="PPIase_dom_sf"/>
</dbReference>
<dbReference type="InterPro" id="IPR001179">
    <property type="entry name" value="PPIase_FKBP_dom"/>
</dbReference>
<dbReference type="InterPro" id="IPR005215">
    <property type="entry name" value="Trig_fac"/>
</dbReference>
<dbReference type="InterPro" id="IPR008880">
    <property type="entry name" value="Trigger_fac_C"/>
</dbReference>
<dbReference type="InterPro" id="IPR037041">
    <property type="entry name" value="Trigger_fac_C_sf"/>
</dbReference>
<dbReference type="InterPro" id="IPR008881">
    <property type="entry name" value="Trigger_fac_ribosome-bd_bac"/>
</dbReference>
<dbReference type="InterPro" id="IPR036611">
    <property type="entry name" value="Trigger_fac_ribosome-bd_sf"/>
</dbReference>
<dbReference type="InterPro" id="IPR027304">
    <property type="entry name" value="Trigger_fact/SurA_dom_sf"/>
</dbReference>
<dbReference type="NCBIfam" id="TIGR00115">
    <property type="entry name" value="tig"/>
    <property type="match status" value="1"/>
</dbReference>
<dbReference type="PANTHER" id="PTHR30560">
    <property type="entry name" value="TRIGGER FACTOR CHAPERONE AND PEPTIDYL-PROLYL CIS/TRANS ISOMERASE"/>
    <property type="match status" value="1"/>
</dbReference>
<dbReference type="PANTHER" id="PTHR30560:SF3">
    <property type="entry name" value="TRIGGER FACTOR-LIKE PROTEIN TIG, CHLOROPLASTIC"/>
    <property type="match status" value="1"/>
</dbReference>
<dbReference type="Pfam" id="PF00254">
    <property type="entry name" value="FKBP_C"/>
    <property type="match status" value="1"/>
</dbReference>
<dbReference type="Pfam" id="PF05698">
    <property type="entry name" value="Trigger_C"/>
    <property type="match status" value="1"/>
</dbReference>
<dbReference type="Pfam" id="PF05697">
    <property type="entry name" value="Trigger_N"/>
    <property type="match status" value="1"/>
</dbReference>
<dbReference type="SUPFAM" id="SSF54534">
    <property type="entry name" value="FKBP-like"/>
    <property type="match status" value="1"/>
</dbReference>
<dbReference type="SUPFAM" id="SSF109998">
    <property type="entry name" value="Triger factor/SurA peptide-binding domain-like"/>
    <property type="match status" value="1"/>
</dbReference>
<dbReference type="SUPFAM" id="SSF102735">
    <property type="entry name" value="Trigger factor ribosome-binding domain"/>
    <property type="match status" value="1"/>
</dbReference>
<dbReference type="PROSITE" id="PS50059">
    <property type="entry name" value="FKBP_PPIASE"/>
    <property type="match status" value="1"/>
</dbReference>
<accession>A7HY57</accession>
<gene>
    <name evidence="1" type="primary">tig</name>
    <name type="ordered locus">Plav_3235</name>
</gene>
<reference key="1">
    <citation type="journal article" date="2011" name="Stand. Genomic Sci.">
        <title>Complete genome sequence of Parvibaculum lavamentivorans type strain (DS-1(T)).</title>
        <authorList>
            <person name="Schleheck D."/>
            <person name="Weiss M."/>
            <person name="Pitluck S."/>
            <person name="Bruce D."/>
            <person name="Land M.L."/>
            <person name="Han S."/>
            <person name="Saunders E."/>
            <person name="Tapia R."/>
            <person name="Detter C."/>
            <person name="Brettin T."/>
            <person name="Han J."/>
            <person name="Woyke T."/>
            <person name="Goodwin L."/>
            <person name="Pennacchio L."/>
            <person name="Nolan M."/>
            <person name="Cook A.M."/>
            <person name="Kjelleberg S."/>
            <person name="Thomas T."/>
        </authorList>
    </citation>
    <scope>NUCLEOTIDE SEQUENCE [LARGE SCALE GENOMIC DNA]</scope>
    <source>
        <strain>DS-1 / DSM 13023 / NCIMB 13966</strain>
    </source>
</reference>
<protein>
    <recommendedName>
        <fullName evidence="1">Trigger factor</fullName>
        <shortName evidence="1">TF</shortName>
        <ecNumber evidence="1">5.2.1.8</ecNumber>
    </recommendedName>
    <alternativeName>
        <fullName evidence="1">PPIase</fullName>
    </alternativeName>
</protein>
<organism>
    <name type="scientific">Parvibaculum lavamentivorans (strain DS-1 / DSM 13023 / NCIMB 13966)</name>
    <dbReference type="NCBI Taxonomy" id="402881"/>
    <lineage>
        <taxon>Bacteria</taxon>
        <taxon>Pseudomonadati</taxon>
        <taxon>Pseudomonadota</taxon>
        <taxon>Alphaproteobacteria</taxon>
        <taxon>Hyphomicrobiales</taxon>
        <taxon>Parvibaculaceae</taxon>
        <taxon>Parvibaculum</taxon>
    </lineage>
</organism>
<sequence>MQVTVTNADGLKRELKVQVPSQELEAKLGAKLDEMKNQVRLKGFRPGKVPVSHLRKTFGKQVMGDVIQETVGESSQQALQDESLRPAFQPSIDLEGEIQDVLDGKADLTFKMSFEVIPAFELSDFSKVSLERLTAEVKDEDIDVALKRLAENQKNFEPREEGAKAETGDLLTIDFVGKIDGEAFEGGSAEDANLEIGSGRFIPGFEEQLVGVKVGDETQVKVAFPADYGAEHLAGKDAVFDVKVKEVKAPAEVKLDDELAKRFGLESMEKLREALGEQMKGEYARMSRMHLKRAMLDKLDELHSFELPPTMVEQEFQQIWQQFEHELSHQNKTAADLDEPEEDVRAEYRKIAERRVRLGLLLAEVGEKNNITVTEQELNQALAERARQFPGQEQQLYRYFQQNPQAIQELRAPIFEDKVVDFIAELAKVEDKVVSRDELFADPDADEHEHHHHDHDHDHDHDHDHDHGHDHDHGDEKPKKKPAAKKAAAKSDDGEAKPAAKKAPAKKKKED</sequence>
<feature type="chain" id="PRO_0000322449" description="Trigger factor">
    <location>
        <begin position="1"/>
        <end position="511"/>
    </location>
</feature>
<feature type="domain" description="PPIase FKBP-type" evidence="1">
    <location>
        <begin position="168"/>
        <end position="253"/>
    </location>
</feature>
<feature type="region of interest" description="Disordered" evidence="2">
    <location>
        <begin position="446"/>
        <end position="511"/>
    </location>
</feature>
<feature type="compositionally biased region" description="Basic and acidic residues" evidence="2">
    <location>
        <begin position="455"/>
        <end position="478"/>
    </location>
</feature>
<feature type="compositionally biased region" description="Basic residues" evidence="2">
    <location>
        <begin position="479"/>
        <end position="488"/>
    </location>
</feature>
<feature type="compositionally biased region" description="Basic and acidic residues" evidence="2">
    <location>
        <begin position="489"/>
        <end position="498"/>
    </location>
</feature>
<feature type="compositionally biased region" description="Basic residues" evidence="2">
    <location>
        <begin position="499"/>
        <end position="511"/>
    </location>
</feature>
<proteinExistence type="inferred from homology"/>
<name>TIG_PARL1</name>
<comment type="function">
    <text evidence="1">Involved in protein export. Acts as a chaperone by maintaining the newly synthesized protein in an open conformation. Functions as a peptidyl-prolyl cis-trans isomerase.</text>
</comment>
<comment type="catalytic activity">
    <reaction evidence="1">
        <text>[protein]-peptidylproline (omega=180) = [protein]-peptidylproline (omega=0)</text>
        <dbReference type="Rhea" id="RHEA:16237"/>
        <dbReference type="Rhea" id="RHEA-COMP:10747"/>
        <dbReference type="Rhea" id="RHEA-COMP:10748"/>
        <dbReference type="ChEBI" id="CHEBI:83833"/>
        <dbReference type="ChEBI" id="CHEBI:83834"/>
        <dbReference type="EC" id="5.2.1.8"/>
    </reaction>
</comment>
<comment type="subcellular location">
    <subcellularLocation>
        <location>Cytoplasm</location>
    </subcellularLocation>
    <text evidence="1">About half TF is bound to the ribosome near the polypeptide exit tunnel while the other half is free in the cytoplasm.</text>
</comment>
<comment type="domain">
    <text evidence="1">Consists of 3 domains; the N-terminus binds the ribosome, the middle domain has PPIase activity, while the C-terminus has intrinsic chaperone activity on its own.</text>
</comment>
<comment type="similarity">
    <text evidence="1">Belongs to the FKBP-type PPIase family. Tig subfamily.</text>
</comment>
<comment type="sequence caution" evidence="3">
    <conflict type="erroneous initiation">
        <sequence resource="EMBL-CDS" id="ABS64840"/>
    </conflict>
</comment>
<evidence type="ECO:0000255" key="1">
    <source>
        <dbReference type="HAMAP-Rule" id="MF_00303"/>
    </source>
</evidence>
<evidence type="ECO:0000256" key="2">
    <source>
        <dbReference type="SAM" id="MobiDB-lite"/>
    </source>
</evidence>
<evidence type="ECO:0000305" key="3"/>
<keyword id="KW-0131">Cell cycle</keyword>
<keyword id="KW-0132">Cell division</keyword>
<keyword id="KW-0143">Chaperone</keyword>
<keyword id="KW-0963">Cytoplasm</keyword>
<keyword id="KW-0413">Isomerase</keyword>
<keyword id="KW-1185">Reference proteome</keyword>
<keyword id="KW-0697">Rotamase</keyword>